<name>YI036_YEAST</name>
<proteinExistence type="uncertain"/>
<gene>
    <name evidence="4" type="ordered locus">YIR036W-A</name>
</gene>
<protein>
    <recommendedName>
        <fullName evidence="2">Putative uncharacterized membrane protein YIR036W-A</fullName>
    </recommendedName>
</protein>
<dbReference type="EMBL" id="KJ412280">
    <property type="protein sequence ID" value="AHX39323.1"/>
    <property type="molecule type" value="Genomic_DNA"/>
</dbReference>
<dbReference type="SMR" id="A0A023PYI5"/>
<dbReference type="PaxDb" id="4932-YIR036W-A"/>
<dbReference type="EnsemblFungi" id="YIR036W-A_mRNA">
    <property type="protein sequence ID" value="YIR036W-A"/>
    <property type="gene ID" value="YIR036W-A"/>
</dbReference>
<dbReference type="AGR" id="SGD:S000028803"/>
<dbReference type="SGD" id="S000028803">
    <property type="gene designation" value="YIR036W-A"/>
</dbReference>
<dbReference type="HOGENOM" id="CLU_1907876_0_0_1"/>
<dbReference type="GO" id="GO:0016020">
    <property type="term" value="C:membrane"/>
    <property type="evidence" value="ECO:0007669"/>
    <property type="project" value="UniProtKB-SubCell"/>
</dbReference>
<organism>
    <name type="scientific">Saccharomyces cerevisiae (strain ATCC 204508 / S288c)</name>
    <name type="common">Baker's yeast</name>
    <dbReference type="NCBI Taxonomy" id="559292"/>
    <lineage>
        <taxon>Eukaryota</taxon>
        <taxon>Fungi</taxon>
        <taxon>Dikarya</taxon>
        <taxon>Ascomycota</taxon>
        <taxon>Saccharomycotina</taxon>
        <taxon>Saccharomycetes</taxon>
        <taxon>Saccharomycetales</taxon>
        <taxon>Saccharomycetaceae</taxon>
        <taxon>Saccharomyces</taxon>
    </lineage>
</organism>
<keyword id="KW-0472">Membrane</keyword>
<keyword id="KW-0812">Transmembrane</keyword>
<keyword id="KW-1133">Transmembrane helix</keyword>
<reference key="1">
    <citation type="journal article" date="1997" name="Nature">
        <title>The nucleotide sequence of Saccharomyces cerevisiae chromosome IX.</title>
        <authorList>
            <person name="Churcher C.M."/>
            <person name="Bowman S."/>
            <person name="Badcock K."/>
            <person name="Bankier A.T."/>
            <person name="Brown D."/>
            <person name="Chillingworth T."/>
            <person name="Connor R."/>
            <person name="Devlin K."/>
            <person name="Gentles S."/>
            <person name="Hamlin N."/>
            <person name="Harris D.E."/>
            <person name="Horsnell T."/>
            <person name="Hunt S."/>
            <person name="Jagels K."/>
            <person name="Jones M."/>
            <person name="Lye G."/>
            <person name="Moule S."/>
            <person name="Odell C."/>
            <person name="Pearson D."/>
            <person name="Rajandream M.A."/>
            <person name="Rice P."/>
            <person name="Rowley N."/>
            <person name="Skelton J."/>
            <person name="Smith V."/>
            <person name="Walsh S.V."/>
            <person name="Whitehead S."/>
            <person name="Barrell B.G."/>
        </authorList>
    </citation>
    <scope>NUCLEOTIDE SEQUENCE [LARGE SCALE GENOMIC DNA]</scope>
    <source>
        <strain>ATCC 204508 / S288c</strain>
    </source>
</reference>
<reference key="2">
    <citation type="journal article" date="2014" name="G3 (Bethesda)">
        <title>The reference genome sequence of Saccharomyces cerevisiae: Then and now.</title>
        <authorList>
            <person name="Engel S.R."/>
            <person name="Dietrich F.S."/>
            <person name="Fisk D.G."/>
            <person name="Binkley G."/>
            <person name="Balakrishnan R."/>
            <person name="Costanzo M.C."/>
            <person name="Dwight S.S."/>
            <person name="Hitz B.C."/>
            <person name="Karra K."/>
            <person name="Nash R.S."/>
            <person name="Weng S."/>
            <person name="Wong E.D."/>
            <person name="Lloyd P."/>
            <person name="Skrzypek M.S."/>
            <person name="Miyasato S.R."/>
            <person name="Simison M."/>
            <person name="Cherry J.M."/>
        </authorList>
    </citation>
    <scope>GENOME REANNOTATION</scope>
    <source>
        <strain>ATCC 204508 / S288c</strain>
    </source>
</reference>
<evidence type="ECO:0000255" key="1"/>
<evidence type="ECO:0000305" key="2"/>
<evidence type="ECO:0000305" key="3">
    <source>
    </source>
</evidence>
<evidence type="ECO:0000312" key="4">
    <source>
        <dbReference type="SGD" id="S000028803"/>
    </source>
</evidence>
<comment type="subcellular location">
    <subcellularLocation>
        <location evidence="1">Membrane</location>
        <topology evidence="1">Single-pass membrane protein</topology>
    </subcellularLocation>
</comment>
<comment type="miscellaneous">
    <text evidence="2">Partially overlaps IRC24.</text>
</comment>
<comment type="caution">
    <text evidence="3">Product of a dubious gene prediction unlikely to encode a functional protein. Because of that it is not part of the S.cerevisiae S288c complete/reference proteome set.</text>
</comment>
<feature type="chain" id="PRO_0000431033" description="Putative uncharacterized membrane protein YIR036W-A">
    <location>
        <begin position="1"/>
        <end position="133"/>
    </location>
</feature>
<feature type="transmembrane region" description="Helical" evidence="1">
    <location>
        <begin position="91"/>
        <end position="113"/>
    </location>
</feature>
<sequence length="133" mass="15235">MLLPDFLHQRFHSRPVRDVEDTIDKFVCTVFSLQRLQTSFRSCYAVDDAFIVLFDNSFHQLQANPTGGTCNQNNLAHIPSLTDYKLFLLLLFATALISCIPSSFSALSFLATLRKRSKSEKKREKTMRNSMLP</sequence>
<accession>A0A023PYI5</accession>